<sequence>MAHKKAGGSTRNGRDSESKRLGVKLFGGQEVKAGNILVRQRGTKFHGGENVGMGKDHTLFAKTAGKVKFEVKGPKNRKYVSIVAA</sequence>
<name>RL27_TERTT</name>
<evidence type="ECO:0000255" key="1">
    <source>
        <dbReference type="HAMAP-Rule" id="MF_00539"/>
    </source>
</evidence>
<evidence type="ECO:0000256" key="2">
    <source>
        <dbReference type="SAM" id="MobiDB-lite"/>
    </source>
</evidence>
<evidence type="ECO:0000305" key="3"/>
<dbReference type="EMBL" id="CP001614">
    <property type="protein sequence ID" value="ACR12044.1"/>
    <property type="molecule type" value="Genomic_DNA"/>
</dbReference>
<dbReference type="RefSeq" id="WP_015818156.1">
    <property type="nucleotide sequence ID" value="NC_012997.1"/>
</dbReference>
<dbReference type="SMR" id="C5BQB3"/>
<dbReference type="STRING" id="377629.TERTU_0961"/>
<dbReference type="GeneID" id="58408733"/>
<dbReference type="GeneID" id="93857691"/>
<dbReference type="KEGG" id="ttu:TERTU_0961"/>
<dbReference type="eggNOG" id="COG0211">
    <property type="taxonomic scope" value="Bacteria"/>
</dbReference>
<dbReference type="HOGENOM" id="CLU_095424_4_1_6"/>
<dbReference type="OrthoDB" id="9803474at2"/>
<dbReference type="Proteomes" id="UP000009080">
    <property type="component" value="Chromosome"/>
</dbReference>
<dbReference type="GO" id="GO:0022625">
    <property type="term" value="C:cytosolic large ribosomal subunit"/>
    <property type="evidence" value="ECO:0007669"/>
    <property type="project" value="TreeGrafter"/>
</dbReference>
<dbReference type="GO" id="GO:0003735">
    <property type="term" value="F:structural constituent of ribosome"/>
    <property type="evidence" value="ECO:0007669"/>
    <property type="project" value="InterPro"/>
</dbReference>
<dbReference type="GO" id="GO:0006412">
    <property type="term" value="P:translation"/>
    <property type="evidence" value="ECO:0007669"/>
    <property type="project" value="UniProtKB-UniRule"/>
</dbReference>
<dbReference type="FunFam" id="2.40.50.100:FF:000001">
    <property type="entry name" value="50S ribosomal protein L27"/>
    <property type="match status" value="1"/>
</dbReference>
<dbReference type="Gene3D" id="2.40.50.100">
    <property type="match status" value="1"/>
</dbReference>
<dbReference type="HAMAP" id="MF_00539">
    <property type="entry name" value="Ribosomal_bL27"/>
    <property type="match status" value="1"/>
</dbReference>
<dbReference type="InterPro" id="IPR001684">
    <property type="entry name" value="Ribosomal_bL27"/>
</dbReference>
<dbReference type="InterPro" id="IPR018261">
    <property type="entry name" value="Ribosomal_bL27_CS"/>
</dbReference>
<dbReference type="NCBIfam" id="TIGR00062">
    <property type="entry name" value="L27"/>
    <property type="match status" value="1"/>
</dbReference>
<dbReference type="PANTHER" id="PTHR15893:SF0">
    <property type="entry name" value="LARGE RIBOSOMAL SUBUNIT PROTEIN BL27M"/>
    <property type="match status" value="1"/>
</dbReference>
<dbReference type="PANTHER" id="PTHR15893">
    <property type="entry name" value="RIBOSOMAL PROTEIN L27"/>
    <property type="match status" value="1"/>
</dbReference>
<dbReference type="Pfam" id="PF01016">
    <property type="entry name" value="Ribosomal_L27"/>
    <property type="match status" value="1"/>
</dbReference>
<dbReference type="PRINTS" id="PR00063">
    <property type="entry name" value="RIBOSOMALL27"/>
</dbReference>
<dbReference type="SUPFAM" id="SSF110324">
    <property type="entry name" value="Ribosomal L27 protein-like"/>
    <property type="match status" value="1"/>
</dbReference>
<dbReference type="PROSITE" id="PS00831">
    <property type="entry name" value="RIBOSOMAL_L27"/>
    <property type="match status" value="1"/>
</dbReference>
<feature type="chain" id="PRO_1000211942" description="Large ribosomal subunit protein bL27">
    <location>
        <begin position="1"/>
        <end position="85"/>
    </location>
</feature>
<feature type="region of interest" description="Disordered" evidence="2">
    <location>
        <begin position="1"/>
        <end position="22"/>
    </location>
</feature>
<protein>
    <recommendedName>
        <fullName evidence="1">Large ribosomal subunit protein bL27</fullName>
    </recommendedName>
    <alternativeName>
        <fullName evidence="3">50S ribosomal protein L27</fullName>
    </alternativeName>
</protein>
<comment type="similarity">
    <text evidence="1">Belongs to the bacterial ribosomal protein bL27 family.</text>
</comment>
<accession>C5BQB3</accession>
<proteinExistence type="inferred from homology"/>
<gene>
    <name evidence="1" type="primary">rpmA</name>
    <name type="ordered locus">TERTU_0961</name>
</gene>
<organism>
    <name type="scientific">Teredinibacter turnerae (strain ATCC 39867 / T7901)</name>
    <dbReference type="NCBI Taxonomy" id="377629"/>
    <lineage>
        <taxon>Bacteria</taxon>
        <taxon>Pseudomonadati</taxon>
        <taxon>Pseudomonadota</taxon>
        <taxon>Gammaproteobacteria</taxon>
        <taxon>Cellvibrionales</taxon>
        <taxon>Cellvibrionaceae</taxon>
        <taxon>Teredinibacter</taxon>
    </lineage>
</organism>
<reference key="1">
    <citation type="journal article" date="2009" name="PLoS ONE">
        <title>The complete genome of Teredinibacter turnerae T7901: an intracellular endosymbiont of marine wood-boring bivalves (shipworms).</title>
        <authorList>
            <person name="Yang J.C."/>
            <person name="Madupu R."/>
            <person name="Durkin A.S."/>
            <person name="Ekborg N.A."/>
            <person name="Pedamallu C.S."/>
            <person name="Hostetler J.B."/>
            <person name="Radune D."/>
            <person name="Toms B.S."/>
            <person name="Henrissat B."/>
            <person name="Coutinho P.M."/>
            <person name="Schwarz S."/>
            <person name="Field L."/>
            <person name="Trindade-Silva A.E."/>
            <person name="Soares C.A.G."/>
            <person name="Elshahawi S."/>
            <person name="Hanora A."/>
            <person name="Schmidt E.W."/>
            <person name="Haygood M.G."/>
            <person name="Posfai J."/>
            <person name="Benner J."/>
            <person name="Madinger C."/>
            <person name="Nove J."/>
            <person name="Anton B."/>
            <person name="Chaudhary K."/>
            <person name="Foster J."/>
            <person name="Holman A."/>
            <person name="Kumar S."/>
            <person name="Lessard P.A."/>
            <person name="Luyten Y.A."/>
            <person name="Slatko B."/>
            <person name="Wood N."/>
            <person name="Wu B."/>
            <person name="Teplitski M."/>
            <person name="Mougous J.D."/>
            <person name="Ward N."/>
            <person name="Eisen J.A."/>
            <person name="Badger J.H."/>
            <person name="Distel D.L."/>
        </authorList>
    </citation>
    <scope>NUCLEOTIDE SEQUENCE [LARGE SCALE GENOMIC DNA]</scope>
    <source>
        <strain>ATCC 39867 / T7901</strain>
    </source>
</reference>
<keyword id="KW-1185">Reference proteome</keyword>
<keyword id="KW-0687">Ribonucleoprotein</keyword>
<keyword id="KW-0689">Ribosomal protein</keyword>